<reference key="1">
    <citation type="journal article" date="1995" name="Microbiology">
        <title>The CrP operon of Chlamydia psittaci and Chlamydia pneumoniae.</title>
        <authorList>
            <person name="Watson M.W."/>
            <person name="Clarke I.N."/>
            <person name="Everson J.S."/>
            <person name="Lambden P.R."/>
        </authorList>
    </citation>
    <scope>NUCLEOTIDE SEQUENCE [GENOMIC DNA]</scope>
    <scope>DEVELOPMENTAL STAGE</scope>
    <source>
        <strain>IOL-207</strain>
    </source>
</reference>
<reference key="2">
    <citation type="journal article" date="1999" name="Nat. Genet.">
        <title>Comparative genomes of Chlamydia pneumoniae and C. trachomatis.</title>
        <authorList>
            <person name="Kalman S."/>
            <person name="Mitchell W.P."/>
            <person name="Marathe R."/>
            <person name="Lammel C.J."/>
            <person name="Fan J."/>
            <person name="Hyman R.W."/>
            <person name="Olinger L."/>
            <person name="Grimwood J."/>
            <person name="Davis R.W."/>
            <person name="Stephens R.S."/>
        </authorList>
    </citation>
    <scope>NUCLEOTIDE SEQUENCE [LARGE SCALE GENOMIC DNA]</scope>
    <source>
        <strain>CWL029</strain>
    </source>
</reference>
<reference key="3">
    <citation type="journal article" date="2000" name="Nucleic Acids Res.">
        <title>Genome sequences of Chlamydia trachomatis MoPn and Chlamydia pneumoniae AR39.</title>
        <authorList>
            <person name="Read T.D."/>
            <person name="Brunham R.C."/>
            <person name="Shen C."/>
            <person name="Gill S.R."/>
            <person name="Heidelberg J.F."/>
            <person name="White O."/>
            <person name="Hickey E.K."/>
            <person name="Peterson J.D."/>
            <person name="Utterback T.R."/>
            <person name="Berry K.J."/>
            <person name="Bass S."/>
            <person name="Linher K.D."/>
            <person name="Weidman J.F."/>
            <person name="Khouri H.M."/>
            <person name="Craven B."/>
            <person name="Bowman C."/>
            <person name="Dodson R.J."/>
            <person name="Gwinn M.L."/>
            <person name="Nelson W.C."/>
            <person name="DeBoy R.T."/>
            <person name="Kolonay J.F."/>
            <person name="McClarty G."/>
            <person name="Salzberg S.L."/>
            <person name="Eisen J.A."/>
            <person name="Fraser C.M."/>
        </authorList>
    </citation>
    <scope>NUCLEOTIDE SEQUENCE [LARGE SCALE GENOMIC DNA]</scope>
    <source>
        <strain>AR39</strain>
    </source>
</reference>
<reference key="4">
    <citation type="journal article" date="2000" name="Nucleic Acids Res.">
        <title>Comparison of whole genome sequences of Chlamydia pneumoniae J138 from Japan and CWL029 from USA.</title>
        <authorList>
            <person name="Shirai M."/>
            <person name="Hirakawa H."/>
            <person name="Kimoto M."/>
            <person name="Tabuchi M."/>
            <person name="Kishi F."/>
            <person name="Ouchi K."/>
            <person name="Shiba T."/>
            <person name="Ishii K."/>
            <person name="Hattori M."/>
            <person name="Kuhara S."/>
            <person name="Nakazawa T."/>
        </authorList>
    </citation>
    <scope>NUCLEOTIDE SEQUENCE [LARGE SCALE GENOMIC DNA]</scope>
    <source>
        <strain>J138</strain>
    </source>
</reference>
<reference key="5">
    <citation type="submission" date="2002-05" db="EMBL/GenBank/DDBJ databases">
        <title>The genome sequence of Chlamydia pneumoniae TW183 and comparison with other Chlamydia strains based on whole genome sequence analysis.</title>
        <authorList>
            <person name="Geng M.M."/>
            <person name="Schuhmacher A."/>
            <person name="Muehldorfer I."/>
            <person name="Bensch K.W."/>
            <person name="Schaefer K.P."/>
            <person name="Schneider S."/>
            <person name="Pohl T."/>
            <person name="Essig A."/>
            <person name="Marre R."/>
            <person name="Melchers K."/>
        </authorList>
    </citation>
    <scope>NUCLEOTIDE SEQUENCE [LARGE SCALE GENOMIC DNA]</scope>
    <source>
        <strain>TW-183</strain>
    </source>
</reference>
<feature type="signal peptide" evidence="2">
    <location>
        <begin position="1"/>
        <end position="19"/>
    </location>
</feature>
<feature type="chain" id="PRO_0000018155" description="Small cysteine-rich outer membrane protein OmcA">
    <location>
        <begin position="20"/>
        <end position="90"/>
    </location>
</feature>
<feature type="region of interest" description="Disordered" evidence="3">
    <location>
        <begin position="69"/>
        <end position="90"/>
    </location>
</feature>
<feature type="lipid moiety-binding region" description="N-palmitoyl cysteine" evidence="5">
    <location>
        <position position="20"/>
    </location>
</feature>
<feature type="lipid moiety-binding region" description="S-diacylglycerol cysteine" evidence="5">
    <location>
        <position position="20"/>
    </location>
</feature>
<feature type="sequence variant" description="In strain: IOL-207.">
    <original>C</original>
    <variation>S</variation>
    <location>
        <position position="20"/>
    </location>
</feature>
<organism>
    <name type="scientific">Chlamydia pneumoniae</name>
    <name type="common">Chlamydophila pneumoniae</name>
    <dbReference type="NCBI Taxonomy" id="83558"/>
    <lineage>
        <taxon>Bacteria</taxon>
        <taxon>Pseudomonadati</taxon>
        <taxon>Chlamydiota</taxon>
        <taxon>Chlamydiia</taxon>
        <taxon>Chlamydiales</taxon>
        <taxon>Chlamydiaceae</taxon>
        <taxon>Chlamydia/Chlamydophila group</taxon>
        <taxon>Chlamydia</taxon>
    </lineage>
</organism>
<keyword id="KW-0998">Cell outer membrane</keyword>
<keyword id="KW-0133">Cell shape</keyword>
<keyword id="KW-1015">Disulfide bond</keyword>
<keyword id="KW-0449">Lipoprotein</keyword>
<keyword id="KW-0472">Membrane</keyword>
<keyword id="KW-0564">Palmitate</keyword>
<keyword id="KW-0732">Signal</keyword>
<gene>
    <name type="primary">omcA</name>
    <name type="ordered locus">CPn_0558</name>
    <name type="ordered locus">CP_0193</name>
    <name type="ordered locus">CpB0580</name>
</gene>
<evidence type="ECO:0000250" key="1"/>
<evidence type="ECO:0000255" key="2">
    <source>
        <dbReference type="PROSITE-ProRule" id="PRU00303"/>
    </source>
</evidence>
<evidence type="ECO:0000256" key="3">
    <source>
        <dbReference type="SAM" id="MobiDB-lite"/>
    </source>
</evidence>
<evidence type="ECO:0000269" key="4">
    <source>
    </source>
</evidence>
<evidence type="ECO:0000305" key="5"/>
<proteinExistence type="evidence at transcript level"/>
<accession>Q9Z7Z5</accession>
<accession>Q46183</accession>
<accession>Q9JQI5</accession>
<protein>
    <recommendedName>
        <fullName>Small cysteine-rich outer membrane protein OmcA</fullName>
        <shortName>Small-CRP</shortName>
    </recommendedName>
    <alternativeName>
        <fullName>9 kDa cysteine-rich lipoprotein</fullName>
        <shortName>9KD-CRP</shortName>
    </alternativeName>
</protein>
<comment type="function">
    <text evidence="1">In elementary bodies (EBs, the infectious stage, which is able to survive outside the host cell) provides the structural integrity of the outer envelope through disulfide cross-links with the large cysteine-rich periplasmic protein and the major outer membrane porin. It has been described in publications as the Sarkosyl-insoluble COMC (Chlamydia outer membrane complex), and serves as the functional equivalent of peptidoglycan (By similarity).</text>
</comment>
<comment type="subunit">
    <text evidence="1">Part of a disulfide cross-linked outer membrane complex (COMC) composed of the major outer membrane porin (MOMP), the small cysteine-rich protein (OmcA) and the large cysteine-rich periplasmic protein (OmcB).</text>
</comment>
<comment type="subcellular location">
    <subcellularLocation>
        <location evidence="5">Cell outer membrane</location>
        <topology evidence="2">Lipid-anchor</topology>
    </subcellularLocation>
    <text>The protein moiety probably penetrates into the periplasm.</text>
</comment>
<comment type="developmental stage">
    <text evidence="4">It is present but the disulfide bonds are reduced in reticulate bodies (RBs).</text>
</comment>
<comment type="caution">
    <text evidence="5">In strain IOL-207 the Cys that is thought to be palmitoylated is mutated to Ser; presumably the following Cys is acylated instead.</text>
</comment>
<sequence length="90" mass="9410">MKKAVLIAAMFCGVVSLSSCCRIVDCCFEDPCAPSSCNPCEVIRKKERSCGGNACGSYVPSCSNPCGSTECNSQSPQVKGCTSPDGRCKQ</sequence>
<dbReference type="EMBL" id="X53511">
    <property type="protein sequence ID" value="CAA37589.1"/>
    <property type="molecule type" value="Genomic_DNA"/>
</dbReference>
<dbReference type="EMBL" id="AE001363">
    <property type="protein sequence ID" value="AAD18698.1"/>
    <property type="molecule type" value="Genomic_DNA"/>
</dbReference>
<dbReference type="EMBL" id="AE002161">
    <property type="protein sequence ID" value="AAF38066.1"/>
    <property type="molecule type" value="Genomic_DNA"/>
</dbReference>
<dbReference type="EMBL" id="BA000008">
    <property type="protein sequence ID" value="BAA98764.1"/>
    <property type="molecule type" value="Genomic_DNA"/>
</dbReference>
<dbReference type="EMBL" id="AE009440">
    <property type="protein sequence ID" value="AAP98509.1"/>
    <property type="molecule type" value="Genomic_DNA"/>
</dbReference>
<dbReference type="PIR" id="A72064">
    <property type="entry name" value="A72064"/>
</dbReference>
<dbReference type="PIR" id="B86560">
    <property type="entry name" value="B86560"/>
</dbReference>
<dbReference type="RefSeq" id="NP_224754.1">
    <property type="nucleotide sequence ID" value="NC_000922.1"/>
</dbReference>
<dbReference type="RefSeq" id="WP_010883196.1">
    <property type="nucleotide sequence ID" value="NZ_LN847257.1"/>
</dbReference>
<dbReference type="STRING" id="406984.CPK_ORF01124"/>
<dbReference type="GeneID" id="45050602"/>
<dbReference type="KEGG" id="cpa:CP_0193"/>
<dbReference type="KEGG" id="cpj:omcA"/>
<dbReference type="KEGG" id="cpn:CPn_0558"/>
<dbReference type="KEGG" id="cpt:CpB0580"/>
<dbReference type="PATRIC" id="fig|115713.3.peg.619"/>
<dbReference type="HOGENOM" id="CLU_2463467_0_0_0"/>
<dbReference type="OrthoDB" id="18978at2"/>
<dbReference type="Proteomes" id="UP000000583">
    <property type="component" value="Chromosome"/>
</dbReference>
<dbReference type="Proteomes" id="UP000000801">
    <property type="component" value="Chromosome"/>
</dbReference>
<dbReference type="GO" id="GO:0009279">
    <property type="term" value="C:cell outer membrane"/>
    <property type="evidence" value="ECO:0007669"/>
    <property type="project" value="UniProtKB-SubCell"/>
</dbReference>
<dbReference type="GO" id="GO:0005201">
    <property type="term" value="F:extracellular matrix structural constituent"/>
    <property type="evidence" value="ECO:0007669"/>
    <property type="project" value="InterPro"/>
</dbReference>
<dbReference type="GO" id="GO:0008360">
    <property type="term" value="P:regulation of cell shape"/>
    <property type="evidence" value="ECO:0007669"/>
    <property type="project" value="UniProtKB-KW"/>
</dbReference>
<dbReference type="InterPro" id="IPR003517">
    <property type="entry name" value="Cys-rich_OMP3_Chlamydia"/>
</dbReference>
<dbReference type="Pfam" id="PF03503">
    <property type="entry name" value="Chlam_OMP3"/>
    <property type="match status" value="1"/>
</dbReference>
<dbReference type="PRINTS" id="PR01335">
    <property type="entry name" value="CHLAMIDIAOM3"/>
</dbReference>
<dbReference type="PROSITE" id="PS51257">
    <property type="entry name" value="PROKAR_LIPOPROTEIN"/>
    <property type="match status" value="1"/>
</dbReference>
<name>OMCA_CHLPN</name>